<proteinExistence type="inferred from homology"/>
<organism>
    <name type="scientific">Cochliobolus lunatus</name>
    <name type="common">Filamentous fungus</name>
    <name type="synonym">Curvularia lunata</name>
    <dbReference type="NCBI Taxonomy" id="5503"/>
    <lineage>
        <taxon>Eukaryota</taxon>
        <taxon>Fungi</taxon>
        <taxon>Dikarya</taxon>
        <taxon>Ascomycota</taxon>
        <taxon>Pezizomycotina</taxon>
        <taxon>Dothideomycetes</taxon>
        <taxon>Pleosporomycetidae</taxon>
        <taxon>Pleosporales</taxon>
        <taxon>Pleosporineae</taxon>
        <taxon>Pleosporaceae</taxon>
        <taxon>Curvularia</taxon>
    </lineage>
</organism>
<feature type="chain" id="PRO_0000452637" description="Oxidoreductase clz16">
    <location>
        <begin position="1"/>
        <end position="293"/>
    </location>
</feature>
<protein>
    <recommendedName>
        <fullName evidence="1">Oxidoreductase clz16</fullName>
        <ecNumber evidence="1">1.-.-.-</ecNumber>
    </recommendedName>
    <alternativeName>
        <fullName evidence="3">Squalestatin S1 biosynthesis cluster protein clz16</fullName>
    </alternativeName>
    <alternativeName>
        <fullName evidence="3">Zaragozic acid A biosynthesis cluster protein 16</fullName>
    </alternativeName>
</protein>
<gene>
    <name evidence="3" type="primary">clz16</name>
</gene>
<accession>A0A345BJP7</accession>
<name>CLZ16_COCLU</name>
<keyword id="KW-0560">Oxidoreductase</keyword>
<comment type="function">
    <text evidence="1 2 5">Oxidoreductase; part of the gene cluster that mediates the biosynthesis of squalestatin S1 (SQS1, also known as zaragozic acid A), a heavily oxidized fungal polyketide that offers potent cholesterol lowering activity by targeting squalene synthase (SS) (PubMed:28605916). SQS1 is composed of a 2,8-dioxobicyclic[3.2.1]octane-3,4,5-tricarboxyclic acid core that is connected to two lipophilic polyketide arms (PubMed:28605916). These initial steps feature the priming of an unusual benzoic acid starter unit onto the highly reducing polyketide synthase clz14, followed by oxaloacetate extension and product release to generate a tricarboxylic acid containing product (PubMed:28605916). The phenylalanine ammonia lyase (PAL) clz10 and the acyl-CoA ligase clz12 are involved in transforming phenylalanine into benzoyl-CoA (PubMed:28605916). The citrate synthase-like protein clz17 is involved in connecting the C-alpha-carbons of the hexaketide chain and oxaloacetate to afford the tricarboxylic acid unit (PubMed:28605916). The potential hydrolytic enzymes, clz11 and clz13, are in close proximity to pks2 and may participate in product release (PubMed:28605916). On the other side, the tetraketide arm is synthesized by a the squalestatin tetraketide synthase clz2 and enzymatically esterified to the core in the last biosynthetic step, by the acetyltransferase clz6 (By similarity). The biosynthesis of the tetraketide must involve 3 rounds of chain extension (By similarity). After the first and second rounds methyl-transfer occurs, and in all rounds of extension the ketoreductase and dehydratase are active (By similarity). The enoyl reductase and C-MeT of clz2 are not active in the final round of extension (By similarity). The acetyltransferase clz6 appears to have a broad substrate selectivity for its acyl CoA substrate, allowing the in vitro synthesis of novel squalestatins (By similarity). The biosynthesis of SQS1 requires several oxidative steps likely performed by oxidoreductases clz3, clz15 and clz16 (Probable). Finally, in support of the identification of the cluster as being responsible for SQS1 production, the cluster contains a gene encoding a putative squalene synthase (SS) clz20, suggesting a likely mechanism for self-resistance (Probable).</text>
</comment>
<comment type="pathway">
    <text evidence="5">Secondary metabolite biosynthesis.</text>
</comment>
<comment type="similarity">
    <text evidence="4">Belongs to the asaB hydroxylase/desaturase family.</text>
</comment>
<reference key="1">
    <citation type="journal article" date="2017" name="Org. Lett.">
        <title>Identification and heterologous production of a benzoyl-primed tricarboxylic acid polyketide intermediate from the zaragozic acid A biosynthetic pathway.</title>
        <authorList>
            <person name="Liu N."/>
            <person name="Hung Y.S."/>
            <person name="Gao S.S."/>
            <person name="Hang L."/>
            <person name="Zou Y."/>
            <person name="Chooi Y.H."/>
            <person name="Tang Y."/>
        </authorList>
    </citation>
    <scope>NUCLEOTIDE SEQUENCE [GENOMIC DNA]</scope>
    <scope>FUNCTION</scope>
    <scope>PATHWAY</scope>
    <source>
        <strain>ATCC 74067</strain>
    </source>
</reference>
<evidence type="ECO:0000250" key="1">
    <source>
        <dbReference type="UniProtKB" id="A0A3G1DJF4"/>
    </source>
</evidence>
<evidence type="ECO:0000269" key="2">
    <source>
    </source>
</evidence>
<evidence type="ECO:0000303" key="3">
    <source>
    </source>
</evidence>
<evidence type="ECO:0000305" key="4"/>
<evidence type="ECO:0000305" key="5">
    <source>
    </source>
</evidence>
<sequence length="293" mass="33691">MSTTTTTLHTTTGTVYVADGTTDGKIGYYNHTDDSTNVIRKPIPIQVEDARTLSKSPTTKEEGYQLVDFHTKLPEGHFLDSKSPENKKVIEQVYFDECRRLVQEVTGAAEAYPYVYRVRNQEQNAKASNKSNFHTDFVPVVHVDRDDITAPQRLRASLGAEKAEMLLSKYKSYGSINVWRPVKNVVQKWPLMLVDHKSIENWDYSTHMFTLHSSNDERVATRGAKDHETILTHDKRYRYIYASDMTPDEAWLFFAFHSDPALGIPHGAFWDDSTKEEALTRCSIEVRIWVFFD</sequence>
<dbReference type="EC" id="1.-.-.-" evidence="1"/>
<dbReference type="EMBL" id="MF806533">
    <property type="protein sequence ID" value="AXF50660.1"/>
    <property type="molecule type" value="Genomic_DNA"/>
</dbReference>
<dbReference type="SMR" id="A0A345BJP7"/>
<dbReference type="GO" id="GO:0016491">
    <property type="term" value="F:oxidoreductase activity"/>
    <property type="evidence" value="ECO:0007669"/>
    <property type="project" value="UniProtKB-KW"/>
</dbReference>
<dbReference type="InterPro" id="IPR044053">
    <property type="entry name" value="AsaB-like"/>
</dbReference>
<dbReference type="NCBIfam" id="NF041278">
    <property type="entry name" value="CmcJ_NvfI_EfuI"/>
    <property type="match status" value="1"/>
</dbReference>
<dbReference type="PANTHER" id="PTHR34598">
    <property type="entry name" value="BLL6449 PROTEIN"/>
    <property type="match status" value="1"/>
</dbReference>
<dbReference type="PANTHER" id="PTHR34598:SF3">
    <property type="entry name" value="OXIDOREDUCTASE AN1597"/>
    <property type="match status" value="1"/>
</dbReference>